<gene>
    <name type="primary">trpF</name>
    <name type="ordered locus">MTBMA_c02370</name>
</gene>
<name>TRPF_METTM</name>
<evidence type="ECO:0000305" key="1"/>
<protein>
    <recommendedName>
        <fullName>N-(5'-phosphoribosyl)anthranilate isomerase</fullName>
        <shortName>PRAI</shortName>
        <ecNumber>5.3.1.24</ecNumber>
    </recommendedName>
</protein>
<sequence length="226" mass="24383">MKIKICGLTREEDVVLADSLGADLLGFIHARRSPRHLELGDVAELSSLIPDEKAVLVTETSETSRIMEAIDKTGIERIQLHSVSPETAGKIHESLHAEGYSLELTLAVPPLSSHICGHEFQGISGLILDSASGGRTGGTGKIIPPSDALELLALIRGMDPSLRVTLAGGLTLEFVRKNREYVSKFDCLDFNSGIETGPGVKDHEMMAELMNYIEGLPTRKGAIEEI</sequence>
<accession>P26941</accession>
<accession>D9PUE8</accession>
<comment type="catalytic activity">
    <reaction>
        <text>N-(5-phospho-beta-D-ribosyl)anthranilate = 1-(2-carboxyphenylamino)-1-deoxy-D-ribulose 5-phosphate</text>
        <dbReference type="Rhea" id="RHEA:21540"/>
        <dbReference type="ChEBI" id="CHEBI:18277"/>
        <dbReference type="ChEBI" id="CHEBI:58613"/>
        <dbReference type="EC" id="5.3.1.24"/>
    </reaction>
</comment>
<comment type="pathway">
    <text>Amino-acid biosynthesis; L-tryptophan biosynthesis; L-tryptophan from chorismate: step 3/5.</text>
</comment>
<comment type="similarity">
    <text evidence="1">Belongs to the TrpF family.</text>
</comment>
<comment type="sequence caution" evidence="1">
    <conflict type="erroneous initiation">
        <sequence resource="EMBL-CDS" id="ADL57846"/>
    </conflict>
    <text>Extended N-terminus.</text>
</comment>
<organism>
    <name type="scientific">Methanothermobacter marburgensis (strain ATCC BAA-927 / DSM 2133 / JCM 14651 / NBRC 100331 / OCM 82 / Marburg)</name>
    <name type="common">Methanobacterium thermoautotrophicum</name>
    <dbReference type="NCBI Taxonomy" id="79929"/>
    <lineage>
        <taxon>Archaea</taxon>
        <taxon>Methanobacteriati</taxon>
        <taxon>Methanobacteriota</taxon>
        <taxon>Methanomada group</taxon>
        <taxon>Methanobacteria</taxon>
        <taxon>Methanobacteriales</taxon>
        <taxon>Methanobacteriaceae</taxon>
        <taxon>Methanothermobacter</taxon>
    </lineage>
</organism>
<dbReference type="EC" id="5.3.1.24"/>
<dbReference type="EMBL" id="M65060">
    <property type="protein sequence ID" value="AAA73031.1"/>
    <property type="molecule type" value="Genomic_DNA"/>
</dbReference>
<dbReference type="EMBL" id="CP001710">
    <property type="protein sequence ID" value="ADL57846.1"/>
    <property type="status" value="ALT_INIT"/>
    <property type="molecule type" value="Genomic_DNA"/>
</dbReference>
<dbReference type="RefSeq" id="WP_238523381.1">
    <property type="nucleotide sequence ID" value="NC_014408.1"/>
</dbReference>
<dbReference type="SMR" id="P26941"/>
<dbReference type="STRING" id="79929.MTBMA_c02370"/>
<dbReference type="PaxDb" id="79929-MTBMA_c02370"/>
<dbReference type="GeneID" id="43708265"/>
<dbReference type="KEGG" id="mmg:MTBMA_c02370"/>
<dbReference type="PATRIC" id="fig|79929.8.peg.233"/>
<dbReference type="HOGENOM" id="CLU_076364_2_0_2"/>
<dbReference type="UniPathway" id="UPA00035">
    <property type="reaction ID" value="UER00042"/>
</dbReference>
<dbReference type="Proteomes" id="UP000000345">
    <property type="component" value="Chromosome"/>
</dbReference>
<dbReference type="GO" id="GO:0004640">
    <property type="term" value="F:phosphoribosylanthranilate isomerase activity"/>
    <property type="evidence" value="ECO:0007669"/>
    <property type="project" value="UniProtKB-UniRule"/>
</dbReference>
<dbReference type="GO" id="GO:0000162">
    <property type="term" value="P:L-tryptophan biosynthetic process"/>
    <property type="evidence" value="ECO:0007669"/>
    <property type="project" value="UniProtKB-UniRule"/>
</dbReference>
<dbReference type="CDD" id="cd00405">
    <property type="entry name" value="PRAI"/>
    <property type="match status" value="1"/>
</dbReference>
<dbReference type="Gene3D" id="3.20.20.70">
    <property type="entry name" value="Aldolase class I"/>
    <property type="match status" value="1"/>
</dbReference>
<dbReference type="HAMAP" id="MF_00135">
    <property type="entry name" value="PRAI"/>
    <property type="match status" value="1"/>
</dbReference>
<dbReference type="InterPro" id="IPR013785">
    <property type="entry name" value="Aldolase_TIM"/>
</dbReference>
<dbReference type="InterPro" id="IPR001240">
    <property type="entry name" value="PRAI_dom"/>
</dbReference>
<dbReference type="InterPro" id="IPR011060">
    <property type="entry name" value="RibuloseP-bd_barrel"/>
</dbReference>
<dbReference type="InterPro" id="IPR044643">
    <property type="entry name" value="TrpF_fam"/>
</dbReference>
<dbReference type="PANTHER" id="PTHR42894">
    <property type="entry name" value="N-(5'-PHOSPHORIBOSYL)ANTHRANILATE ISOMERASE"/>
    <property type="match status" value="1"/>
</dbReference>
<dbReference type="PANTHER" id="PTHR42894:SF1">
    <property type="entry name" value="N-(5'-PHOSPHORIBOSYL)ANTHRANILATE ISOMERASE"/>
    <property type="match status" value="1"/>
</dbReference>
<dbReference type="Pfam" id="PF00697">
    <property type="entry name" value="PRAI"/>
    <property type="match status" value="1"/>
</dbReference>
<dbReference type="SUPFAM" id="SSF51366">
    <property type="entry name" value="Ribulose-phoshate binding barrel"/>
    <property type="match status" value="1"/>
</dbReference>
<reference key="1">
    <citation type="journal article" date="1991" name="J. Bacteriol.">
        <title>Tryptophan gene cluster of Methanobacterium thermoautotrophicum Marburg: molecular cloning and nucleotide sequence of a putative trpEGCFBAD operon.</title>
        <authorList>
            <person name="Meile L."/>
            <person name="Stettler R."/>
            <person name="Banholzer R."/>
            <person name="Kotik M."/>
            <person name="Leisinger T."/>
        </authorList>
    </citation>
    <scope>NUCLEOTIDE SEQUENCE [GENOMIC DNA]</scope>
    <source>
        <strain>ATCC BAA-927 / DSM 2133 / JCM 14651 / NBRC 100331 / OCM 82 / Marburg</strain>
    </source>
</reference>
<reference key="2">
    <citation type="journal article" date="2010" name="J. Bacteriol.">
        <title>Complete genome sequence of Methanothermobacter marburgensis, a methanoarchaeon model organism.</title>
        <authorList>
            <person name="Liesegang H."/>
            <person name="Kaster A.K."/>
            <person name="Wiezer A."/>
            <person name="Goenrich M."/>
            <person name="Wollherr A."/>
            <person name="Seedorf H."/>
            <person name="Gottschalk G."/>
            <person name="Thauer R.K."/>
        </authorList>
    </citation>
    <scope>NUCLEOTIDE SEQUENCE [LARGE SCALE GENOMIC DNA]</scope>
    <source>
        <strain>ATCC BAA-927 / DSM 2133 / JCM 14651 / NBRC 100331 / OCM 82 / Marburg</strain>
    </source>
</reference>
<proteinExistence type="inferred from homology"/>
<feature type="chain" id="PRO_0000154408" description="N-(5'-phosphoribosyl)anthranilate isomerase">
    <location>
        <begin position="1"/>
        <end position="226"/>
    </location>
</feature>
<keyword id="KW-0028">Amino-acid biosynthesis</keyword>
<keyword id="KW-0057">Aromatic amino acid biosynthesis</keyword>
<keyword id="KW-0413">Isomerase</keyword>
<keyword id="KW-0822">Tryptophan biosynthesis</keyword>